<feature type="chain" id="PRO_0000126414" description="Small ribosomal subunit protein uS8">
    <location>
        <begin position="1"/>
        <end position="133"/>
    </location>
</feature>
<keyword id="KW-1185">Reference proteome</keyword>
<keyword id="KW-0687">Ribonucleoprotein</keyword>
<keyword id="KW-0689">Ribosomal protein</keyword>
<keyword id="KW-0694">RNA-binding</keyword>
<keyword id="KW-0699">rRNA-binding</keyword>
<dbReference type="EMBL" id="BA000045">
    <property type="protein sequence ID" value="BAC91854.1"/>
    <property type="molecule type" value="Genomic_DNA"/>
</dbReference>
<dbReference type="RefSeq" id="NP_926859.1">
    <property type="nucleotide sequence ID" value="NC_005125.1"/>
</dbReference>
<dbReference type="RefSeq" id="WP_011143901.1">
    <property type="nucleotide sequence ID" value="NC_005125.1"/>
</dbReference>
<dbReference type="SMR" id="Q7NEG6"/>
<dbReference type="FunCoup" id="Q7NEG6">
    <property type="interactions" value="242"/>
</dbReference>
<dbReference type="STRING" id="251221.gene:10761430"/>
<dbReference type="EnsemblBacteria" id="BAC91854">
    <property type="protein sequence ID" value="BAC91854"/>
    <property type="gene ID" value="BAC91854"/>
</dbReference>
<dbReference type="KEGG" id="gvi:gll3913"/>
<dbReference type="PATRIC" id="fig|251221.4.peg.3946"/>
<dbReference type="eggNOG" id="COG0096">
    <property type="taxonomic scope" value="Bacteria"/>
</dbReference>
<dbReference type="HOGENOM" id="CLU_098428_0_2_3"/>
<dbReference type="InParanoid" id="Q7NEG6"/>
<dbReference type="OrthoDB" id="9802617at2"/>
<dbReference type="PhylomeDB" id="Q7NEG6"/>
<dbReference type="Proteomes" id="UP000000557">
    <property type="component" value="Chromosome"/>
</dbReference>
<dbReference type="GO" id="GO:0022627">
    <property type="term" value="C:cytosolic small ribosomal subunit"/>
    <property type="evidence" value="ECO:0000318"/>
    <property type="project" value="GO_Central"/>
</dbReference>
<dbReference type="GO" id="GO:0019843">
    <property type="term" value="F:rRNA binding"/>
    <property type="evidence" value="ECO:0007669"/>
    <property type="project" value="UniProtKB-UniRule"/>
</dbReference>
<dbReference type="GO" id="GO:0003735">
    <property type="term" value="F:structural constituent of ribosome"/>
    <property type="evidence" value="ECO:0000318"/>
    <property type="project" value="GO_Central"/>
</dbReference>
<dbReference type="GO" id="GO:0006412">
    <property type="term" value="P:translation"/>
    <property type="evidence" value="ECO:0007669"/>
    <property type="project" value="UniProtKB-UniRule"/>
</dbReference>
<dbReference type="FunFam" id="3.30.1370.30:FF:000002">
    <property type="entry name" value="30S ribosomal protein S8"/>
    <property type="match status" value="1"/>
</dbReference>
<dbReference type="FunFam" id="3.30.1490.10:FF:000001">
    <property type="entry name" value="30S ribosomal protein S8"/>
    <property type="match status" value="1"/>
</dbReference>
<dbReference type="Gene3D" id="3.30.1370.30">
    <property type="match status" value="1"/>
</dbReference>
<dbReference type="Gene3D" id="3.30.1490.10">
    <property type="match status" value="1"/>
</dbReference>
<dbReference type="HAMAP" id="MF_01302_B">
    <property type="entry name" value="Ribosomal_uS8_B"/>
    <property type="match status" value="1"/>
</dbReference>
<dbReference type="InterPro" id="IPR000630">
    <property type="entry name" value="Ribosomal_uS8"/>
</dbReference>
<dbReference type="InterPro" id="IPR047863">
    <property type="entry name" value="Ribosomal_uS8_CS"/>
</dbReference>
<dbReference type="InterPro" id="IPR035987">
    <property type="entry name" value="Ribosomal_uS8_sf"/>
</dbReference>
<dbReference type="NCBIfam" id="NF001109">
    <property type="entry name" value="PRK00136.1"/>
    <property type="match status" value="1"/>
</dbReference>
<dbReference type="PANTHER" id="PTHR11758">
    <property type="entry name" value="40S RIBOSOMAL PROTEIN S15A"/>
    <property type="match status" value="1"/>
</dbReference>
<dbReference type="Pfam" id="PF00410">
    <property type="entry name" value="Ribosomal_S8"/>
    <property type="match status" value="1"/>
</dbReference>
<dbReference type="SUPFAM" id="SSF56047">
    <property type="entry name" value="Ribosomal protein S8"/>
    <property type="match status" value="1"/>
</dbReference>
<dbReference type="PROSITE" id="PS00053">
    <property type="entry name" value="RIBOSOMAL_S8"/>
    <property type="match status" value="1"/>
</dbReference>
<proteinExistence type="inferred from homology"/>
<accession>Q7NEG6</accession>
<protein>
    <recommendedName>
        <fullName evidence="1">Small ribosomal subunit protein uS8</fullName>
    </recommendedName>
    <alternativeName>
        <fullName evidence="2">30S ribosomal protein S8</fullName>
    </alternativeName>
</protein>
<reference key="1">
    <citation type="journal article" date="2003" name="DNA Res.">
        <title>Complete genome structure of Gloeobacter violaceus PCC 7421, a cyanobacterium that lacks thylakoids.</title>
        <authorList>
            <person name="Nakamura Y."/>
            <person name="Kaneko T."/>
            <person name="Sato S."/>
            <person name="Mimuro M."/>
            <person name="Miyashita H."/>
            <person name="Tsuchiya T."/>
            <person name="Sasamoto S."/>
            <person name="Watanabe A."/>
            <person name="Kawashima K."/>
            <person name="Kishida Y."/>
            <person name="Kiyokawa C."/>
            <person name="Kohara M."/>
            <person name="Matsumoto M."/>
            <person name="Matsuno A."/>
            <person name="Nakazaki N."/>
            <person name="Shimpo S."/>
            <person name="Takeuchi C."/>
            <person name="Yamada M."/>
            <person name="Tabata S."/>
        </authorList>
    </citation>
    <scope>NUCLEOTIDE SEQUENCE [LARGE SCALE GENOMIC DNA]</scope>
    <source>
        <strain>ATCC 29082 / PCC 7421</strain>
    </source>
</reference>
<comment type="function">
    <text evidence="1">One of the primary rRNA binding proteins, it binds directly to 16S rRNA central domain where it helps coordinate assembly of the platform of the 30S subunit.</text>
</comment>
<comment type="subunit">
    <text evidence="1">Part of the 30S ribosomal subunit. Contacts proteins S5 and S12.</text>
</comment>
<comment type="similarity">
    <text evidence="1">Belongs to the universal ribosomal protein uS8 family.</text>
</comment>
<organism>
    <name type="scientific">Gloeobacter violaceus (strain ATCC 29082 / PCC 7421)</name>
    <dbReference type="NCBI Taxonomy" id="251221"/>
    <lineage>
        <taxon>Bacteria</taxon>
        <taxon>Bacillati</taxon>
        <taxon>Cyanobacteriota</taxon>
        <taxon>Cyanophyceae</taxon>
        <taxon>Gloeobacterales</taxon>
        <taxon>Gloeobacteraceae</taxon>
        <taxon>Gloeobacter</taxon>
    </lineage>
</organism>
<name>RS8_GLOVI</name>
<gene>
    <name evidence="1" type="primary">rpsH</name>
    <name evidence="1" type="synonym">rps8</name>
    <name type="ordered locus">gll3913</name>
</gene>
<evidence type="ECO:0000255" key="1">
    <source>
        <dbReference type="HAMAP-Rule" id="MF_01302"/>
    </source>
</evidence>
<evidence type="ECO:0000305" key="2"/>
<sequence length="133" mass="14805">MAVNDTLADMLTRIRNASIVKHDIVPVPSTRMTRSVAEVLKMEGLILEYQDQGEGKDRQLLLTLKYAGRQRRPLITNLKRVSRPGLRVYANRKELPRVLGGIGIAIISTSQGVMTDRDARRAGVGGEVLCYVF</sequence>